<evidence type="ECO:0000255" key="1">
    <source>
        <dbReference type="HAMAP-Rule" id="MF_02002"/>
    </source>
</evidence>
<protein>
    <recommendedName>
        <fullName evidence="1">Isoleucine--tRNA ligase</fullName>
        <ecNumber evidence="1">6.1.1.5</ecNumber>
    </recommendedName>
    <alternativeName>
        <fullName evidence="1">Isoleucyl-tRNA synthetase</fullName>
        <shortName evidence="1">IleRS</shortName>
    </alternativeName>
</protein>
<dbReference type="EC" id="6.1.1.5" evidence="1"/>
<dbReference type="EMBL" id="CP000419">
    <property type="protein sequence ID" value="ABJ66034.1"/>
    <property type="molecule type" value="Genomic_DNA"/>
</dbReference>
<dbReference type="RefSeq" id="WP_011681009.1">
    <property type="nucleotide sequence ID" value="NC_008532.1"/>
</dbReference>
<dbReference type="SMR" id="Q03L88"/>
<dbReference type="KEGG" id="ste:STER_0783"/>
<dbReference type="HOGENOM" id="CLU_001493_7_1_9"/>
<dbReference type="GO" id="GO:0005829">
    <property type="term" value="C:cytosol"/>
    <property type="evidence" value="ECO:0007669"/>
    <property type="project" value="TreeGrafter"/>
</dbReference>
<dbReference type="GO" id="GO:0002161">
    <property type="term" value="F:aminoacyl-tRNA deacylase activity"/>
    <property type="evidence" value="ECO:0007669"/>
    <property type="project" value="InterPro"/>
</dbReference>
<dbReference type="GO" id="GO:0005524">
    <property type="term" value="F:ATP binding"/>
    <property type="evidence" value="ECO:0007669"/>
    <property type="project" value="UniProtKB-UniRule"/>
</dbReference>
<dbReference type="GO" id="GO:0004822">
    <property type="term" value="F:isoleucine-tRNA ligase activity"/>
    <property type="evidence" value="ECO:0007669"/>
    <property type="project" value="UniProtKB-UniRule"/>
</dbReference>
<dbReference type="GO" id="GO:0000049">
    <property type="term" value="F:tRNA binding"/>
    <property type="evidence" value="ECO:0007669"/>
    <property type="project" value="InterPro"/>
</dbReference>
<dbReference type="GO" id="GO:0008270">
    <property type="term" value="F:zinc ion binding"/>
    <property type="evidence" value="ECO:0007669"/>
    <property type="project" value="UniProtKB-UniRule"/>
</dbReference>
<dbReference type="GO" id="GO:0006428">
    <property type="term" value="P:isoleucyl-tRNA aminoacylation"/>
    <property type="evidence" value="ECO:0007669"/>
    <property type="project" value="UniProtKB-UniRule"/>
</dbReference>
<dbReference type="CDD" id="cd07960">
    <property type="entry name" value="Anticodon_Ia_Ile_BEm"/>
    <property type="match status" value="1"/>
</dbReference>
<dbReference type="FunFam" id="1.10.10.830:FF:000001">
    <property type="entry name" value="Isoleucine--tRNA ligase"/>
    <property type="match status" value="1"/>
</dbReference>
<dbReference type="FunFam" id="1.10.730.20:FF:000001">
    <property type="entry name" value="Isoleucine--tRNA ligase"/>
    <property type="match status" value="1"/>
</dbReference>
<dbReference type="FunFam" id="3.40.50.620:FF:000092">
    <property type="entry name" value="Isoleucine--tRNA ligase"/>
    <property type="match status" value="1"/>
</dbReference>
<dbReference type="FunFam" id="3.90.740.10:FF:000006">
    <property type="entry name" value="Isoleucine--tRNA ligase"/>
    <property type="match status" value="1"/>
</dbReference>
<dbReference type="Gene3D" id="1.10.730.20">
    <property type="match status" value="1"/>
</dbReference>
<dbReference type="Gene3D" id="3.40.50.620">
    <property type="entry name" value="HUPs"/>
    <property type="match status" value="2"/>
</dbReference>
<dbReference type="Gene3D" id="1.10.10.830">
    <property type="entry name" value="Ile-tRNA synthetase CP2 domain-like"/>
    <property type="match status" value="1"/>
</dbReference>
<dbReference type="HAMAP" id="MF_02002">
    <property type="entry name" value="Ile_tRNA_synth_type1"/>
    <property type="match status" value="1"/>
</dbReference>
<dbReference type="InterPro" id="IPR001412">
    <property type="entry name" value="aa-tRNA-synth_I_CS"/>
</dbReference>
<dbReference type="InterPro" id="IPR002300">
    <property type="entry name" value="aa-tRNA-synth_Ia"/>
</dbReference>
<dbReference type="InterPro" id="IPR033708">
    <property type="entry name" value="Anticodon_Ile_BEm"/>
</dbReference>
<dbReference type="InterPro" id="IPR002301">
    <property type="entry name" value="Ile-tRNA-ligase"/>
</dbReference>
<dbReference type="InterPro" id="IPR023585">
    <property type="entry name" value="Ile-tRNA-ligase_type1"/>
</dbReference>
<dbReference type="InterPro" id="IPR050081">
    <property type="entry name" value="Ile-tRNA_ligase"/>
</dbReference>
<dbReference type="InterPro" id="IPR013155">
    <property type="entry name" value="M/V/L/I-tRNA-synth_anticd-bd"/>
</dbReference>
<dbReference type="InterPro" id="IPR014729">
    <property type="entry name" value="Rossmann-like_a/b/a_fold"/>
</dbReference>
<dbReference type="InterPro" id="IPR009080">
    <property type="entry name" value="tRNAsynth_Ia_anticodon-bd"/>
</dbReference>
<dbReference type="InterPro" id="IPR009008">
    <property type="entry name" value="Val/Leu/Ile-tRNA-synth_edit"/>
</dbReference>
<dbReference type="InterPro" id="IPR010663">
    <property type="entry name" value="Znf_FPG/IleRS"/>
</dbReference>
<dbReference type="NCBIfam" id="TIGR00392">
    <property type="entry name" value="ileS"/>
    <property type="match status" value="1"/>
</dbReference>
<dbReference type="PANTHER" id="PTHR42765:SF1">
    <property type="entry name" value="ISOLEUCINE--TRNA LIGASE, MITOCHONDRIAL"/>
    <property type="match status" value="1"/>
</dbReference>
<dbReference type="PANTHER" id="PTHR42765">
    <property type="entry name" value="SOLEUCYL-TRNA SYNTHETASE"/>
    <property type="match status" value="1"/>
</dbReference>
<dbReference type="Pfam" id="PF08264">
    <property type="entry name" value="Anticodon_1"/>
    <property type="match status" value="1"/>
</dbReference>
<dbReference type="Pfam" id="PF00133">
    <property type="entry name" value="tRNA-synt_1"/>
    <property type="match status" value="1"/>
</dbReference>
<dbReference type="Pfam" id="PF06827">
    <property type="entry name" value="zf-FPG_IleRS"/>
    <property type="match status" value="1"/>
</dbReference>
<dbReference type="PRINTS" id="PR00984">
    <property type="entry name" value="TRNASYNTHILE"/>
</dbReference>
<dbReference type="SUPFAM" id="SSF47323">
    <property type="entry name" value="Anticodon-binding domain of a subclass of class I aminoacyl-tRNA synthetases"/>
    <property type="match status" value="1"/>
</dbReference>
<dbReference type="SUPFAM" id="SSF52374">
    <property type="entry name" value="Nucleotidylyl transferase"/>
    <property type="match status" value="1"/>
</dbReference>
<dbReference type="SUPFAM" id="SSF50677">
    <property type="entry name" value="ValRS/IleRS/LeuRS editing domain"/>
    <property type="match status" value="1"/>
</dbReference>
<dbReference type="PROSITE" id="PS00178">
    <property type="entry name" value="AA_TRNA_LIGASE_I"/>
    <property type="match status" value="1"/>
</dbReference>
<gene>
    <name evidence="1" type="primary">ileS</name>
    <name type="ordered locus">STER_0783</name>
</gene>
<reference key="1">
    <citation type="journal article" date="2006" name="Proc. Natl. Acad. Sci. U.S.A.">
        <title>Comparative genomics of the lactic acid bacteria.</title>
        <authorList>
            <person name="Makarova K.S."/>
            <person name="Slesarev A."/>
            <person name="Wolf Y.I."/>
            <person name="Sorokin A."/>
            <person name="Mirkin B."/>
            <person name="Koonin E.V."/>
            <person name="Pavlov A."/>
            <person name="Pavlova N."/>
            <person name="Karamychev V."/>
            <person name="Polouchine N."/>
            <person name="Shakhova V."/>
            <person name="Grigoriev I."/>
            <person name="Lou Y."/>
            <person name="Rohksar D."/>
            <person name="Lucas S."/>
            <person name="Huang K."/>
            <person name="Goodstein D.M."/>
            <person name="Hawkins T."/>
            <person name="Plengvidhya V."/>
            <person name="Welker D."/>
            <person name="Hughes J."/>
            <person name="Goh Y."/>
            <person name="Benson A."/>
            <person name="Baldwin K."/>
            <person name="Lee J.-H."/>
            <person name="Diaz-Muniz I."/>
            <person name="Dosti B."/>
            <person name="Smeianov V."/>
            <person name="Wechter W."/>
            <person name="Barabote R."/>
            <person name="Lorca G."/>
            <person name="Altermann E."/>
            <person name="Barrangou R."/>
            <person name="Ganesan B."/>
            <person name="Xie Y."/>
            <person name="Rawsthorne H."/>
            <person name="Tamir D."/>
            <person name="Parker C."/>
            <person name="Breidt F."/>
            <person name="Broadbent J.R."/>
            <person name="Hutkins R."/>
            <person name="O'Sullivan D."/>
            <person name="Steele J."/>
            <person name="Unlu G."/>
            <person name="Saier M.H. Jr."/>
            <person name="Klaenhammer T."/>
            <person name="Richardson P."/>
            <person name="Kozyavkin S."/>
            <person name="Weimer B.C."/>
            <person name="Mills D.A."/>
        </authorList>
    </citation>
    <scope>NUCLEOTIDE SEQUENCE [LARGE SCALE GENOMIC DNA]</scope>
    <source>
        <strain>ATCC BAA-491 / LMD-9</strain>
    </source>
</reference>
<name>SYI_STRTD</name>
<comment type="function">
    <text evidence="1">Catalyzes the attachment of isoleucine to tRNA(Ile). As IleRS can inadvertently accommodate and process structurally similar amino acids such as valine, to avoid such errors it has two additional distinct tRNA(Ile)-dependent editing activities. One activity is designated as 'pretransfer' editing and involves the hydrolysis of activated Val-AMP. The other activity is designated 'posttransfer' editing and involves deacylation of mischarged Val-tRNA(Ile).</text>
</comment>
<comment type="catalytic activity">
    <reaction evidence="1">
        <text>tRNA(Ile) + L-isoleucine + ATP = L-isoleucyl-tRNA(Ile) + AMP + diphosphate</text>
        <dbReference type="Rhea" id="RHEA:11060"/>
        <dbReference type="Rhea" id="RHEA-COMP:9666"/>
        <dbReference type="Rhea" id="RHEA-COMP:9695"/>
        <dbReference type="ChEBI" id="CHEBI:30616"/>
        <dbReference type="ChEBI" id="CHEBI:33019"/>
        <dbReference type="ChEBI" id="CHEBI:58045"/>
        <dbReference type="ChEBI" id="CHEBI:78442"/>
        <dbReference type="ChEBI" id="CHEBI:78528"/>
        <dbReference type="ChEBI" id="CHEBI:456215"/>
        <dbReference type="EC" id="6.1.1.5"/>
    </reaction>
</comment>
<comment type="cofactor">
    <cofactor evidence="1">
        <name>Zn(2+)</name>
        <dbReference type="ChEBI" id="CHEBI:29105"/>
    </cofactor>
    <text evidence="1">Binds 1 zinc ion per subunit.</text>
</comment>
<comment type="subunit">
    <text evidence="1">Monomer.</text>
</comment>
<comment type="subcellular location">
    <subcellularLocation>
        <location evidence="1">Cytoplasm</location>
    </subcellularLocation>
</comment>
<comment type="domain">
    <text evidence="1">IleRS has two distinct active sites: one for aminoacylation and one for editing. The misactivated valine is translocated from the active site to the editing site, which sterically excludes the correctly activated isoleucine. The single editing site contains two valyl binding pockets, one specific for each substrate (Val-AMP or Val-tRNA(Ile)).</text>
</comment>
<comment type="similarity">
    <text evidence="1">Belongs to the class-I aminoacyl-tRNA synthetase family. IleS type 1 subfamily.</text>
</comment>
<sequence>MKLKETLNLGKTAFPMRAGLPNKEPIWQKEWEEAKVYQRRQELNQGKPHFTLHDGPPYANGNIHVGHAMNKISKDIIVRSKSMSGFYAPFIPGWDTHGLPIEQVLAKQGVKRKELDRAEYLKMCRDYALSQVDKQREDFKRLGVSADWENPYVTLTPDYEAAQIRVFGEMAKKGYIYQGAKPVYWSWSSESALAEAEIEYHDLVSTSLYYANKVKDGKGVLDTDTYIVVWTTTPFTVTASRGLAVGADIEYVLVKPAGETRKFIVASELLNSLSEKFAWEEVEVLNTYRGDELNQIVTEHPWDSEVDELVILGEHVTTDSGTGIVHTAPGFGEDDYNVGVANGLEVVVTVNERGIMMENAGPDFAGKFYDKVAPIVMEKLGDLLLAKEEISHSYPFDWRTKKPIIWRAVPQWFASVSKFRQEILDEIEKVKFHSEWGKVRLYNMIRDRGDWVISRQRAWGVPLPIFYAEDRTPIMTEETIEHVAKLFEEHGSVIWWERDAKDLLPEGFTHPGSPNGEFTKENDIMDVWFDSGSSWNGVVVNRPELTYPADLYLEGSDQYRGWFNSSLITSVANHGVAPYKQLLSQGFALDGKGEKMSKSLGNTIAPSDVEKQFGAEILRLWVTSVDTSNDVRISMDILSQVSESYRKIRNTLRFLIANTSDFNPTTDAVAFEDLRSVDQYMTIRFNQLVKNIRDAYENFEFLTIYKSLVNFINVELSAFYLDFAKDVVYIESAKSLERRQMQTVFYDILVKITKLLTPILPHTAEEIWSYLEFENEDYVQLSELPEAEDFANQDALLEKWNAFMDFRGKAQKALEEARNEKVIGKSLEAHLTIYPDAEVKELLESLNTNLAQLLIVSALTIAEGDVPESAVRFQGVSFTVERAEGEVCDRCRRIDPTTKERSYNATICNHCASIIEENFAEVVAEGFEV</sequence>
<organism>
    <name type="scientific">Streptococcus thermophilus (strain ATCC BAA-491 / LMD-9)</name>
    <dbReference type="NCBI Taxonomy" id="322159"/>
    <lineage>
        <taxon>Bacteria</taxon>
        <taxon>Bacillati</taxon>
        <taxon>Bacillota</taxon>
        <taxon>Bacilli</taxon>
        <taxon>Lactobacillales</taxon>
        <taxon>Streptococcaceae</taxon>
        <taxon>Streptococcus</taxon>
    </lineage>
</organism>
<feature type="chain" id="PRO_1000022133" description="Isoleucine--tRNA ligase">
    <location>
        <begin position="1"/>
        <end position="929"/>
    </location>
</feature>
<feature type="short sequence motif" description="'HIGH' region">
    <location>
        <begin position="57"/>
        <end position="67"/>
    </location>
</feature>
<feature type="short sequence motif" description="'KMSKS' region">
    <location>
        <begin position="595"/>
        <end position="599"/>
    </location>
</feature>
<feature type="binding site" evidence="1">
    <location>
        <position position="554"/>
    </location>
    <ligand>
        <name>L-isoleucyl-5'-AMP</name>
        <dbReference type="ChEBI" id="CHEBI:178002"/>
    </ligand>
</feature>
<feature type="binding site" evidence="1">
    <location>
        <position position="598"/>
    </location>
    <ligand>
        <name>ATP</name>
        <dbReference type="ChEBI" id="CHEBI:30616"/>
    </ligand>
</feature>
<feature type="binding site" evidence="1">
    <location>
        <position position="888"/>
    </location>
    <ligand>
        <name>Zn(2+)</name>
        <dbReference type="ChEBI" id="CHEBI:29105"/>
    </ligand>
</feature>
<feature type="binding site" evidence="1">
    <location>
        <position position="891"/>
    </location>
    <ligand>
        <name>Zn(2+)</name>
        <dbReference type="ChEBI" id="CHEBI:29105"/>
    </ligand>
</feature>
<feature type="binding site" evidence="1">
    <location>
        <position position="908"/>
    </location>
    <ligand>
        <name>Zn(2+)</name>
        <dbReference type="ChEBI" id="CHEBI:29105"/>
    </ligand>
</feature>
<feature type="binding site" evidence="1">
    <location>
        <position position="911"/>
    </location>
    <ligand>
        <name>Zn(2+)</name>
        <dbReference type="ChEBI" id="CHEBI:29105"/>
    </ligand>
</feature>
<accession>Q03L88</accession>
<proteinExistence type="inferred from homology"/>
<keyword id="KW-0030">Aminoacyl-tRNA synthetase</keyword>
<keyword id="KW-0067">ATP-binding</keyword>
<keyword id="KW-0963">Cytoplasm</keyword>
<keyword id="KW-0436">Ligase</keyword>
<keyword id="KW-0479">Metal-binding</keyword>
<keyword id="KW-0547">Nucleotide-binding</keyword>
<keyword id="KW-0648">Protein biosynthesis</keyword>
<keyword id="KW-0862">Zinc</keyword>